<accession>Q3ZCC5</accession>
<keyword id="KW-1185">Reference proteome</keyword>
<keyword id="KW-0694">RNA-binding</keyword>
<protein>
    <recommendedName>
        <fullName>Probable RNA-binding protein 18</fullName>
    </recommendedName>
    <alternativeName>
        <fullName>RNA-binding motif protein 18</fullName>
    </alternativeName>
</protein>
<reference key="1">
    <citation type="submission" date="2005-08" db="EMBL/GenBank/DDBJ databases">
        <authorList>
            <consortium name="NIH - Mammalian Gene Collection (MGC) project"/>
        </authorList>
    </citation>
    <scope>NUCLEOTIDE SEQUENCE [LARGE SCALE MRNA]</scope>
    <source>
        <strain>Crossbred X Angus</strain>
        <tissue>Ileum</tissue>
    </source>
</reference>
<evidence type="ECO:0000255" key="1">
    <source>
        <dbReference type="PROSITE-ProRule" id="PRU00176"/>
    </source>
</evidence>
<evidence type="ECO:0000256" key="2">
    <source>
        <dbReference type="SAM" id="MobiDB-lite"/>
    </source>
</evidence>
<proteinExistence type="evidence at transcript level"/>
<sequence length="190" mass="21620">MEAETKTLPLENASILSEGSLQEGHRLWIGNLDPKITEYHLLRLLQKFGTVKQFDFLFHKSGALEGQPRGYCFVNFETKQEAEQAIQCLNGKLALSKKLVVRWAHAQVKRYDHNKNDKILPISLEPSSSTEPAQSNLSVTAKIKAIEAKLKMMAENPDAEYPAAPVYSYFKPPDKKRTTPYSRTAWKSRR</sequence>
<name>RBM18_BOVIN</name>
<dbReference type="EMBL" id="BC102518">
    <property type="protein sequence ID" value="AAI02519.1"/>
    <property type="molecule type" value="mRNA"/>
</dbReference>
<dbReference type="RefSeq" id="NP_001029496.1">
    <property type="nucleotide sequence ID" value="NM_001034324.2"/>
</dbReference>
<dbReference type="SMR" id="Q3ZCC5"/>
<dbReference type="FunCoup" id="Q3ZCC5">
    <property type="interactions" value="3835"/>
</dbReference>
<dbReference type="STRING" id="9913.ENSBTAP00000021769"/>
<dbReference type="PaxDb" id="9913-ENSBTAP00000021769"/>
<dbReference type="Ensembl" id="ENSBTAT00000021769.4">
    <property type="protein sequence ID" value="ENSBTAP00000021769.2"/>
    <property type="gene ID" value="ENSBTAG00000016367.4"/>
</dbReference>
<dbReference type="GeneID" id="508615"/>
<dbReference type="KEGG" id="bta:508615"/>
<dbReference type="CTD" id="92400"/>
<dbReference type="VEuPathDB" id="HostDB:ENSBTAG00000016367"/>
<dbReference type="VGNC" id="VGNC:33789">
    <property type="gene designation" value="RBM18"/>
</dbReference>
<dbReference type="eggNOG" id="ENOG502RH7I">
    <property type="taxonomic scope" value="Eukaryota"/>
</dbReference>
<dbReference type="GeneTree" id="ENSGT00390000013765"/>
<dbReference type="HOGENOM" id="CLU_066926_2_0_1"/>
<dbReference type="InParanoid" id="Q3ZCC5"/>
<dbReference type="OMA" id="FACGRPL"/>
<dbReference type="OrthoDB" id="6730379at2759"/>
<dbReference type="TreeFam" id="TF323314"/>
<dbReference type="Proteomes" id="UP000009136">
    <property type="component" value="Chromosome 11"/>
</dbReference>
<dbReference type="Bgee" id="ENSBTAG00000016367">
    <property type="expression patterns" value="Expressed in oocyte and 107 other cell types or tissues"/>
</dbReference>
<dbReference type="GO" id="GO:0005829">
    <property type="term" value="C:cytosol"/>
    <property type="evidence" value="ECO:0007669"/>
    <property type="project" value="Ensembl"/>
</dbReference>
<dbReference type="GO" id="GO:0045171">
    <property type="term" value="C:intercellular bridge"/>
    <property type="evidence" value="ECO:0007669"/>
    <property type="project" value="Ensembl"/>
</dbReference>
<dbReference type="GO" id="GO:0005654">
    <property type="term" value="C:nucleoplasm"/>
    <property type="evidence" value="ECO:0007669"/>
    <property type="project" value="Ensembl"/>
</dbReference>
<dbReference type="GO" id="GO:0003723">
    <property type="term" value="F:RNA binding"/>
    <property type="evidence" value="ECO:0000318"/>
    <property type="project" value="GO_Central"/>
</dbReference>
<dbReference type="CDD" id="cd12355">
    <property type="entry name" value="RRM_RBM18"/>
    <property type="match status" value="1"/>
</dbReference>
<dbReference type="FunFam" id="3.30.70.330:FF:000185">
    <property type="entry name" value="Probable RNA-binding protein 18"/>
    <property type="match status" value="1"/>
</dbReference>
<dbReference type="Gene3D" id="3.30.70.330">
    <property type="match status" value="1"/>
</dbReference>
<dbReference type="InterPro" id="IPR012677">
    <property type="entry name" value="Nucleotide-bd_a/b_plait_sf"/>
</dbReference>
<dbReference type="InterPro" id="IPR035979">
    <property type="entry name" value="RBD_domain_sf"/>
</dbReference>
<dbReference type="InterPro" id="IPR039157">
    <property type="entry name" value="RBM18_RRM"/>
</dbReference>
<dbReference type="InterPro" id="IPR000504">
    <property type="entry name" value="RRM_dom"/>
</dbReference>
<dbReference type="PANTHER" id="PTHR21245">
    <property type="entry name" value="HETEROGENEOUS NUCLEAR RIBONUCLEOPROTEIN"/>
    <property type="match status" value="1"/>
</dbReference>
<dbReference type="Pfam" id="PF00076">
    <property type="entry name" value="RRM_1"/>
    <property type="match status" value="1"/>
</dbReference>
<dbReference type="SMART" id="SM00360">
    <property type="entry name" value="RRM"/>
    <property type="match status" value="1"/>
</dbReference>
<dbReference type="SUPFAM" id="SSF54928">
    <property type="entry name" value="RNA-binding domain, RBD"/>
    <property type="match status" value="1"/>
</dbReference>
<dbReference type="PROSITE" id="PS50102">
    <property type="entry name" value="RRM"/>
    <property type="match status" value="1"/>
</dbReference>
<gene>
    <name type="primary">RBM18</name>
</gene>
<organism>
    <name type="scientific">Bos taurus</name>
    <name type="common">Bovine</name>
    <dbReference type="NCBI Taxonomy" id="9913"/>
    <lineage>
        <taxon>Eukaryota</taxon>
        <taxon>Metazoa</taxon>
        <taxon>Chordata</taxon>
        <taxon>Craniata</taxon>
        <taxon>Vertebrata</taxon>
        <taxon>Euteleostomi</taxon>
        <taxon>Mammalia</taxon>
        <taxon>Eutheria</taxon>
        <taxon>Laurasiatheria</taxon>
        <taxon>Artiodactyla</taxon>
        <taxon>Ruminantia</taxon>
        <taxon>Pecora</taxon>
        <taxon>Bovidae</taxon>
        <taxon>Bovinae</taxon>
        <taxon>Bos</taxon>
    </lineage>
</organism>
<feature type="chain" id="PRO_0000254121" description="Probable RNA-binding protein 18">
    <location>
        <begin position="1"/>
        <end position="190"/>
    </location>
</feature>
<feature type="domain" description="RRM" evidence="1">
    <location>
        <begin position="25"/>
        <end position="106"/>
    </location>
</feature>
<feature type="region of interest" description="Disordered" evidence="2">
    <location>
        <begin position="166"/>
        <end position="190"/>
    </location>
</feature>